<dbReference type="EC" id="7.1.1.-" evidence="2"/>
<dbReference type="EMBL" id="AE017321">
    <property type="protein sequence ID" value="AAW70831.1"/>
    <property type="molecule type" value="Genomic_DNA"/>
</dbReference>
<dbReference type="RefSeq" id="WP_011256441.1">
    <property type="nucleotide sequence ID" value="NC_006833.1"/>
</dbReference>
<dbReference type="SMR" id="Q5GT43"/>
<dbReference type="STRING" id="292805.Wbm0242"/>
<dbReference type="KEGG" id="wbm:Wbm0242"/>
<dbReference type="eggNOG" id="COG0377">
    <property type="taxonomic scope" value="Bacteria"/>
</dbReference>
<dbReference type="HOGENOM" id="CLU_055737_7_0_5"/>
<dbReference type="Proteomes" id="UP000000534">
    <property type="component" value="Chromosome"/>
</dbReference>
<dbReference type="GO" id="GO:0005886">
    <property type="term" value="C:plasma membrane"/>
    <property type="evidence" value="ECO:0007669"/>
    <property type="project" value="UniProtKB-SubCell"/>
</dbReference>
<dbReference type="GO" id="GO:0045271">
    <property type="term" value="C:respiratory chain complex I"/>
    <property type="evidence" value="ECO:0007669"/>
    <property type="project" value="TreeGrafter"/>
</dbReference>
<dbReference type="GO" id="GO:0051539">
    <property type="term" value="F:4 iron, 4 sulfur cluster binding"/>
    <property type="evidence" value="ECO:0007669"/>
    <property type="project" value="UniProtKB-KW"/>
</dbReference>
<dbReference type="GO" id="GO:0005506">
    <property type="term" value="F:iron ion binding"/>
    <property type="evidence" value="ECO:0007669"/>
    <property type="project" value="UniProtKB-UniRule"/>
</dbReference>
<dbReference type="GO" id="GO:0008137">
    <property type="term" value="F:NADH dehydrogenase (ubiquinone) activity"/>
    <property type="evidence" value="ECO:0007669"/>
    <property type="project" value="InterPro"/>
</dbReference>
<dbReference type="GO" id="GO:0050136">
    <property type="term" value="F:NADH:ubiquinone reductase (non-electrogenic) activity"/>
    <property type="evidence" value="ECO:0007669"/>
    <property type="project" value="UniProtKB-UniRule"/>
</dbReference>
<dbReference type="GO" id="GO:0048038">
    <property type="term" value="F:quinone binding"/>
    <property type="evidence" value="ECO:0007669"/>
    <property type="project" value="UniProtKB-KW"/>
</dbReference>
<dbReference type="GO" id="GO:0009060">
    <property type="term" value="P:aerobic respiration"/>
    <property type="evidence" value="ECO:0007669"/>
    <property type="project" value="TreeGrafter"/>
</dbReference>
<dbReference type="GO" id="GO:0015990">
    <property type="term" value="P:electron transport coupled proton transport"/>
    <property type="evidence" value="ECO:0007669"/>
    <property type="project" value="TreeGrafter"/>
</dbReference>
<dbReference type="FunFam" id="3.40.50.12280:FF:000001">
    <property type="entry name" value="NADH-quinone oxidoreductase subunit B 2"/>
    <property type="match status" value="1"/>
</dbReference>
<dbReference type="Gene3D" id="3.40.50.12280">
    <property type="match status" value="1"/>
</dbReference>
<dbReference type="HAMAP" id="MF_01356">
    <property type="entry name" value="NDH1_NuoB"/>
    <property type="match status" value="1"/>
</dbReference>
<dbReference type="InterPro" id="IPR006137">
    <property type="entry name" value="NADH_UbQ_OxRdtase-like_20kDa"/>
</dbReference>
<dbReference type="InterPro" id="IPR006138">
    <property type="entry name" value="NADH_UQ_OxRdtase_20Kd_su"/>
</dbReference>
<dbReference type="NCBIfam" id="TIGR01957">
    <property type="entry name" value="nuoB_fam"/>
    <property type="match status" value="1"/>
</dbReference>
<dbReference type="NCBIfam" id="NF005012">
    <property type="entry name" value="PRK06411.1"/>
    <property type="match status" value="1"/>
</dbReference>
<dbReference type="PANTHER" id="PTHR11995">
    <property type="entry name" value="NADH DEHYDROGENASE"/>
    <property type="match status" value="1"/>
</dbReference>
<dbReference type="PANTHER" id="PTHR11995:SF14">
    <property type="entry name" value="NADH DEHYDROGENASE [UBIQUINONE] IRON-SULFUR PROTEIN 7, MITOCHONDRIAL"/>
    <property type="match status" value="1"/>
</dbReference>
<dbReference type="Pfam" id="PF01058">
    <property type="entry name" value="Oxidored_q6"/>
    <property type="match status" value="1"/>
</dbReference>
<dbReference type="SUPFAM" id="SSF56770">
    <property type="entry name" value="HydA/Nqo6-like"/>
    <property type="match status" value="1"/>
</dbReference>
<dbReference type="PROSITE" id="PS01150">
    <property type="entry name" value="COMPLEX1_20K"/>
    <property type="match status" value="1"/>
</dbReference>
<organism>
    <name type="scientific">Wolbachia sp. subsp. Brugia malayi (strain TRS)</name>
    <dbReference type="NCBI Taxonomy" id="292805"/>
    <lineage>
        <taxon>Bacteria</taxon>
        <taxon>Pseudomonadati</taxon>
        <taxon>Pseudomonadota</taxon>
        <taxon>Alphaproteobacteria</taxon>
        <taxon>Rickettsiales</taxon>
        <taxon>Anaplasmataceae</taxon>
        <taxon>Wolbachieae</taxon>
        <taxon>Wolbachia</taxon>
    </lineage>
</organism>
<gene>
    <name evidence="2" type="primary">nuoB</name>
    <name type="ordered locus">Wbm0242</name>
</gene>
<feature type="chain" id="PRO_0000358508" description="NADH-quinone oxidoreductase subunit B">
    <location>
        <begin position="1"/>
        <end position="168"/>
    </location>
</feature>
<feature type="binding site" evidence="2">
    <location>
        <position position="49"/>
    </location>
    <ligand>
        <name>[4Fe-4S] cluster</name>
        <dbReference type="ChEBI" id="CHEBI:49883"/>
    </ligand>
</feature>
<feature type="binding site" evidence="2">
    <location>
        <position position="50"/>
    </location>
    <ligand>
        <name>[4Fe-4S] cluster</name>
        <dbReference type="ChEBI" id="CHEBI:49883"/>
    </ligand>
</feature>
<feature type="binding site" evidence="2">
    <location>
        <position position="114"/>
    </location>
    <ligand>
        <name>[4Fe-4S] cluster</name>
        <dbReference type="ChEBI" id="CHEBI:49883"/>
    </ligand>
</feature>
<feature type="binding site" evidence="2">
    <location>
        <position position="144"/>
    </location>
    <ligand>
        <name>[4Fe-4S] cluster</name>
        <dbReference type="ChEBI" id="CHEBI:49883"/>
    </ligand>
</feature>
<sequence length="168" mass="18797">MIGQVLSNDDWNRYKKEGFLVTKFGSLIDYVINWARSGSLWPMTFGLACCAVEMMHTASSRYDLDRYGIMFRASPRQADVMIVAGTLTNKMAAALRKVYDQMADPKYVVSMGSCANGGGYYHYSYSVVRGCDRIVPVDIYVPGCPPTAEALLYGMLCLQNKIKRTQNI</sequence>
<proteinExistence type="inferred from homology"/>
<evidence type="ECO:0000250" key="1"/>
<evidence type="ECO:0000255" key="2">
    <source>
        <dbReference type="HAMAP-Rule" id="MF_01356"/>
    </source>
</evidence>
<accession>Q5GT43</accession>
<name>NUOB_WOLTR</name>
<keyword id="KW-0004">4Fe-4S</keyword>
<keyword id="KW-1003">Cell membrane</keyword>
<keyword id="KW-0408">Iron</keyword>
<keyword id="KW-0411">Iron-sulfur</keyword>
<keyword id="KW-0472">Membrane</keyword>
<keyword id="KW-0479">Metal-binding</keyword>
<keyword id="KW-0520">NAD</keyword>
<keyword id="KW-0874">Quinone</keyword>
<keyword id="KW-1185">Reference proteome</keyword>
<keyword id="KW-1278">Translocase</keyword>
<keyword id="KW-0813">Transport</keyword>
<keyword id="KW-0830">Ubiquinone</keyword>
<protein>
    <recommendedName>
        <fullName evidence="2">NADH-quinone oxidoreductase subunit B</fullName>
        <ecNumber evidence="2">7.1.1.-</ecNumber>
    </recommendedName>
    <alternativeName>
        <fullName evidence="2">NADH dehydrogenase I subunit B</fullName>
    </alternativeName>
    <alternativeName>
        <fullName evidence="2">NDH-1 subunit B</fullName>
    </alternativeName>
</protein>
<reference key="1">
    <citation type="journal article" date="2005" name="PLoS Biol.">
        <title>The Wolbachia genome of Brugia malayi: endosymbiont evolution within a human pathogenic nematode.</title>
        <authorList>
            <person name="Foster J."/>
            <person name="Ganatra M."/>
            <person name="Kamal I."/>
            <person name="Ware J."/>
            <person name="Makarova K."/>
            <person name="Ivanova N."/>
            <person name="Bhattacharyya A."/>
            <person name="Kapatral V."/>
            <person name="Kumar S."/>
            <person name="Posfai J."/>
            <person name="Vincze T."/>
            <person name="Ingram J."/>
            <person name="Moran L."/>
            <person name="Lapidus A."/>
            <person name="Omelchenko M."/>
            <person name="Kyrpides N."/>
            <person name="Ghedin E."/>
            <person name="Wang S."/>
            <person name="Goltsman E."/>
            <person name="Joukov V."/>
            <person name="Ostrovskaya O."/>
            <person name="Tsukerman K."/>
            <person name="Mazur M."/>
            <person name="Comb D."/>
            <person name="Koonin E."/>
            <person name="Slatko B."/>
        </authorList>
    </citation>
    <scope>NUCLEOTIDE SEQUENCE [LARGE SCALE GENOMIC DNA]</scope>
    <source>
        <strain>TRS</strain>
    </source>
</reference>
<comment type="function">
    <text evidence="1">NDH-1 shuttles electrons from NADH, via FMN and iron-sulfur (Fe-S) centers, to quinones in the respiratory chain. Couples the redox reaction to proton translocation (for every two electrons transferred, four hydrogen ions are translocated across the cytoplasmic membrane), and thus conserves the redox energy in a proton gradient (By similarity).</text>
</comment>
<comment type="catalytic activity">
    <reaction evidence="2">
        <text>a quinone + NADH + 5 H(+)(in) = a quinol + NAD(+) + 4 H(+)(out)</text>
        <dbReference type="Rhea" id="RHEA:57888"/>
        <dbReference type="ChEBI" id="CHEBI:15378"/>
        <dbReference type="ChEBI" id="CHEBI:24646"/>
        <dbReference type="ChEBI" id="CHEBI:57540"/>
        <dbReference type="ChEBI" id="CHEBI:57945"/>
        <dbReference type="ChEBI" id="CHEBI:132124"/>
    </reaction>
</comment>
<comment type="cofactor">
    <cofactor evidence="2">
        <name>[4Fe-4S] cluster</name>
        <dbReference type="ChEBI" id="CHEBI:49883"/>
    </cofactor>
    <text evidence="2">Binds 1 [4Fe-4S] cluster.</text>
</comment>
<comment type="subunit">
    <text evidence="2">NDH-1 is composed of 14 different subunits. Subunits NuoB, C, D, E, F, and G constitute the peripheral sector of the complex.</text>
</comment>
<comment type="subcellular location">
    <subcellularLocation>
        <location evidence="2">Cell membrane</location>
        <topology evidence="2">Peripheral membrane protein</topology>
        <orientation evidence="2">Cytoplasmic side</orientation>
    </subcellularLocation>
</comment>
<comment type="similarity">
    <text evidence="2">Belongs to the complex I 20 kDa subunit family.</text>
</comment>